<accession>Q0SYK8</accession>
<sequence length="396" mass="41842">MSEFIAENRGADAITRPNWSAVFSVAFCVACLIIVEFLPVSLLTPMAQDLGISEGVAGQSVTVTAFVAMFASLFITQTIQATDRRYVVILFAVLLTLSCLLVSFANSFSLLLIGRACLGLALGGFWAMSASLTMRLVPPRTVPKALSVIFGAVSIALVIAAPLGSFLGELIGWRNVFNAAAVMGVLCIFWIIKSLPSLPGEPSHQKQNTFRLLQRPGVMAGMIAIFMSFAGQFAFFTYIRPVYMNLAGFGVDGLTLVLLSFGIASFIGTSLSSFILKRSVKLALAGAPLILAVSALVLTLWGSDKIVATGVAIIWGLTFALVPVGWSTWITRSLADQAEKAGSIQVAVIQLANTCGAAIGGYALDNIGLTSPLMLSGTLMLLTALLVTAKVKMKKS</sequence>
<protein>
    <recommendedName>
        <fullName evidence="1">Purine ribonucleoside efflux pump NepI</fullName>
    </recommendedName>
</protein>
<feature type="chain" id="PRO_0000294119" description="Purine ribonucleoside efflux pump NepI">
    <location>
        <begin position="1"/>
        <end position="396"/>
    </location>
</feature>
<feature type="topological domain" description="Cytoplasmic" evidence="1">
    <location>
        <begin position="1"/>
        <end position="21"/>
    </location>
</feature>
<feature type="transmembrane region" description="Helical" evidence="1">
    <location>
        <begin position="22"/>
        <end position="42"/>
    </location>
</feature>
<feature type="topological domain" description="Periplasmic" evidence="1">
    <location>
        <begin position="43"/>
        <end position="54"/>
    </location>
</feature>
<feature type="transmembrane region" description="Helical" evidence="1">
    <location>
        <begin position="55"/>
        <end position="75"/>
    </location>
</feature>
<feature type="topological domain" description="Cytoplasmic" evidence="1">
    <location>
        <begin position="76"/>
        <end position="85"/>
    </location>
</feature>
<feature type="transmembrane region" description="Helical" evidence="1">
    <location>
        <begin position="86"/>
        <end position="106"/>
    </location>
</feature>
<feature type="topological domain" description="Periplasmic" evidence="1">
    <location>
        <position position="107"/>
    </location>
</feature>
<feature type="transmembrane region" description="Helical" evidence="1">
    <location>
        <begin position="108"/>
        <end position="128"/>
    </location>
</feature>
<feature type="topological domain" description="Cytoplasmic" evidence="1">
    <location>
        <begin position="129"/>
        <end position="147"/>
    </location>
</feature>
<feature type="transmembrane region" description="Helical" evidence="1">
    <location>
        <begin position="148"/>
        <end position="168"/>
    </location>
</feature>
<feature type="topological domain" description="Periplasmic" evidence="1">
    <location>
        <begin position="169"/>
        <end position="175"/>
    </location>
</feature>
<feature type="transmembrane region" description="Helical" evidence="1">
    <location>
        <begin position="176"/>
        <end position="196"/>
    </location>
</feature>
<feature type="topological domain" description="Cytoplasmic" evidence="1">
    <location>
        <begin position="197"/>
        <end position="215"/>
    </location>
</feature>
<feature type="transmembrane region" description="Helical" evidence="1">
    <location>
        <begin position="216"/>
        <end position="236"/>
    </location>
</feature>
<feature type="topological domain" description="Periplasmic" evidence="1">
    <location>
        <begin position="237"/>
        <end position="255"/>
    </location>
</feature>
<feature type="transmembrane region" description="Helical" evidence="1">
    <location>
        <begin position="256"/>
        <end position="276"/>
    </location>
</feature>
<feature type="topological domain" description="Cytoplasmic" evidence="1">
    <location>
        <begin position="277"/>
        <end position="281"/>
    </location>
</feature>
<feature type="transmembrane region" description="Helical" evidence="1">
    <location>
        <begin position="282"/>
        <end position="302"/>
    </location>
</feature>
<feature type="topological domain" description="Periplasmic" evidence="1">
    <location>
        <begin position="303"/>
        <end position="305"/>
    </location>
</feature>
<feature type="transmembrane region" description="Helical" evidence="1">
    <location>
        <begin position="306"/>
        <end position="326"/>
    </location>
</feature>
<feature type="topological domain" description="Cytoplasmic" evidence="1">
    <location>
        <begin position="327"/>
        <end position="343"/>
    </location>
</feature>
<feature type="transmembrane region" description="Helical" evidence="1">
    <location>
        <begin position="344"/>
        <end position="364"/>
    </location>
</feature>
<feature type="topological domain" description="Periplasmic" evidence="1">
    <location>
        <begin position="365"/>
        <end position="366"/>
    </location>
</feature>
<feature type="transmembrane region" description="Helical" evidence="1">
    <location>
        <begin position="367"/>
        <end position="387"/>
    </location>
</feature>
<feature type="topological domain" description="Cytoplasmic" evidence="1">
    <location>
        <begin position="388"/>
        <end position="396"/>
    </location>
</feature>
<comment type="function">
    <text evidence="1">Involved in the efflux of purine ribonucleosides, such as inosine and guanosine.</text>
</comment>
<comment type="catalytic activity">
    <reaction evidence="1">
        <text>inosine(in) + H(+)(out) = inosine(out) + H(+)(in)</text>
        <dbReference type="Rhea" id="RHEA:29211"/>
        <dbReference type="ChEBI" id="CHEBI:15378"/>
        <dbReference type="ChEBI" id="CHEBI:17596"/>
    </reaction>
    <physiologicalReaction direction="left-to-right" evidence="1">
        <dbReference type="Rhea" id="RHEA:29212"/>
    </physiologicalReaction>
</comment>
<comment type="catalytic activity">
    <reaction evidence="1">
        <text>guanosine(in) + H(+)(out) = guanosine(out) + H(+)(in)</text>
        <dbReference type="Rhea" id="RHEA:29583"/>
        <dbReference type="ChEBI" id="CHEBI:15378"/>
        <dbReference type="ChEBI" id="CHEBI:16750"/>
    </reaction>
    <physiologicalReaction direction="left-to-right" evidence="1">
        <dbReference type="Rhea" id="RHEA:29584"/>
    </physiologicalReaction>
</comment>
<comment type="subcellular location">
    <subcellularLocation>
        <location evidence="1">Cell inner membrane</location>
        <topology evidence="1">Multi-pass membrane protein</topology>
    </subcellularLocation>
</comment>
<comment type="similarity">
    <text evidence="1">Belongs to the major facilitator superfamily. DHA1 family. NepI (TC 2.A.1.2.26) subfamily.</text>
</comment>
<comment type="sequence caution" evidence="2">
    <conflict type="erroneous initiation">
        <sequence resource="EMBL-CDS" id="ABF05857"/>
    </conflict>
</comment>
<name>NEPI_SHIF8</name>
<gene>
    <name evidence="1" type="primary">nepI</name>
    <name type="ordered locus">SFV_3847</name>
</gene>
<organism>
    <name type="scientific">Shigella flexneri serotype 5b (strain 8401)</name>
    <dbReference type="NCBI Taxonomy" id="373384"/>
    <lineage>
        <taxon>Bacteria</taxon>
        <taxon>Pseudomonadati</taxon>
        <taxon>Pseudomonadota</taxon>
        <taxon>Gammaproteobacteria</taxon>
        <taxon>Enterobacterales</taxon>
        <taxon>Enterobacteriaceae</taxon>
        <taxon>Shigella</taxon>
    </lineage>
</organism>
<keyword id="KW-0050">Antiport</keyword>
<keyword id="KW-0997">Cell inner membrane</keyword>
<keyword id="KW-1003">Cell membrane</keyword>
<keyword id="KW-0472">Membrane</keyword>
<keyword id="KW-0812">Transmembrane</keyword>
<keyword id="KW-1133">Transmembrane helix</keyword>
<keyword id="KW-0813">Transport</keyword>
<proteinExistence type="inferred from homology"/>
<reference key="1">
    <citation type="journal article" date="2006" name="BMC Genomics">
        <title>Complete genome sequence of Shigella flexneri 5b and comparison with Shigella flexneri 2a.</title>
        <authorList>
            <person name="Nie H."/>
            <person name="Yang F."/>
            <person name="Zhang X."/>
            <person name="Yang J."/>
            <person name="Chen L."/>
            <person name="Wang J."/>
            <person name="Xiong Z."/>
            <person name="Peng J."/>
            <person name="Sun L."/>
            <person name="Dong J."/>
            <person name="Xue Y."/>
            <person name="Xu X."/>
            <person name="Chen S."/>
            <person name="Yao Z."/>
            <person name="Shen Y."/>
            <person name="Jin Q."/>
        </authorList>
    </citation>
    <scope>NUCLEOTIDE SEQUENCE [LARGE SCALE GENOMIC DNA]</scope>
    <source>
        <strain>8401</strain>
    </source>
</reference>
<dbReference type="EMBL" id="CP000266">
    <property type="protein sequence ID" value="ABF05857.1"/>
    <property type="status" value="ALT_INIT"/>
    <property type="molecule type" value="Genomic_DNA"/>
</dbReference>
<dbReference type="RefSeq" id="WP_001288549.1">
    <property type="nucleotide sequence ID" value="NC_008258.1"/>
</dbReference>
<dbReference type="SMR" id="Q0SYK8"/>
<dbReference type="GeneID" id="75205376"/>
<dbReference type="KEGG" id="sfv:SFV_3847"/>
<dbReference type="HOGENOM" id="CLU_001265_61_1_6"/>
<dbReference type="Proteomes" id="UP000000659">
    <property type="component" value="Chromosome"/>
</dbReference>
<dbReference type="GO" id="GO:0005886">
    <property type="term" value="C:plasma membrane"/>
    <property type="evidence" value="ECO:0007669"/>
    <property type="project" value="UniProtKB-SubCell"/>
</dbReference>
<dbReference type="GO" id="GO:0015297">
    <property type="term" value="F:antiporter activity"/>
    <property type="evidence" value="ECO:0007669"/>
    <property type="project" value="UniProtKB-KW"/>
</dbReference>
<dbReference type="GO" id="GO:0015211">
    <property type="term" value="F:purine nucleoside transmembrane transporter activity"/>
    <property type="evidence" value="ECO:0007669"/>
    <property type="project" value="UniProtKB-UniRule"/>
</dbReference>
<dbReference type="CDD" id="cd17324">
    <property type="entry name" value="MFS_NepI_like"/>
    <property type="match status" value="1"/>
</dbReference>
<dbReference type="FunFam" id="1.20.1250.20:FF:000113">
    <property type="entry name" value="Purine ribonucleoside efflux pump NepI"/>
    <property type="match status" value="1"/>
</dbReference>
<dbReference type="Gene3D" id="1.20.1250.20">
    <property type="entry name" value="MFS general substrate transporter like domains"/>
    <property type="match status" value="1"/>
</dbReference>
<dbReference type="HAMAP" id="MF_01189">
    <property type="entry name" value="MFS_NepI"/>
    <property type="match status" value="1"/>
</dbReference>
<dbReference type="InterPro" id="IPR011701">
    <property type="entry name" value="MFS"/>
</dbReference>
<dbReference type="InterPro" id="IPR020846">
    <property type="entry name" value="MFS_dom"/>
</dbReference>
<dbReference type="InterPro" id="IPR050189">
    <property type="entry name" value="MFS_Efflux_Transporters"/>
</dbReference>
<dbReference type="InterPro" id="IPR023680">
    <property type="entry name" value="MFS_NepI"/>
</dbReference>
<dbReference type="InterPro" id="IPR036259">
    <property type="entry name" value="MFS_trans_sf"/>
</dbReference>
<dbReference type="NCBIfam" id="NF007578">
    <property type="entry name" value="PRK10213.1"/>
    <property type="match status" value="1"/>
</dbReference>
<dbReference type="PANTHER" id="PTHR43124">
    <property type="entry name" value="PURINE EFFLUX PUMP PBUE"/>
    <property type="match status" value="1"/>
</dbReference>
<dbReference type="PANTHER" id="PTHR43124:SF5">
    <property type="entry name" value="PURINE RIBONUCLEOSIDE EFFLUX PUMP NEPI"/>
    <property type="match status" value="1"/>
</dbReference>
<dbReference type="Pfam" id="PF07690">
    <property type="entry name" value="MFS_1"/>
    <property type="match status" value="1"/>
</dbReference>
<dbReference type="SUPFAM" id="SSF103473">
    <property type="entry name" value="MFS general substrate transporter"/>
    <property type="match status" value="1"/>
</dbReference>
<dbReference type="PROSITE" id="PS50850">
    <property type="entry name" value="MFS"/>
    <property type="match status" value="1"/>
</dbReference>
<evidence type="ECO:0000255" key="1">
    <source>
        <dbReference type="HAMAP-Rule" id="MF_01189"/>
    </source>
</evidence>
<evidence type="ECO:0000305" key="2"/>